<organism>
    <name type="scientific">Streptomyces coelicolor (strain ATCC BAA-471 / A3(2) / M145)</name>
    <dbReference type="NCBI Taxonomy" id="100226"/>
    <lineage>
        <taxon>Bacteria</taxon>
        <taxon>Bacillati</taxon>
        <taxon>Actinomycetota</taxon>
        <taxon>Actinomycetes</taxon>
        <taxon>Kitasatosporales</taxon>
        <taxon>Streptomycetaceae</taxon>
        <taxon>Streptomyces</taxon>
        <taxon>Streptomyces albidoflavus group</taxon>
    </lineage>
</organism>
<reference key="1">
    <citation type="journal article" date="2002" name="Nature">
        <title>Complete genome sequence of the model actinomycete Streptomyces coelicolor A3(2).</title>
        <authorList>
            <person name="Bentley S.D."/>
            <person name="Chater K.F."/>
            <person name="Cerdeno-Tarraga A.-M."/>
            <person name="Challis G.L."/>
            <person name="Thomson N.R."/>
            <person name="James K.D."/>
            <person name="Harris D.E."/>
            <person name="Quail M.A."/>
            <person name="Kieser H."/>
            <person name="Harper D."/>
            <person name="Bateman A."/>
            <person name="Brown S."/>
            <person name="Chandra G."/>
            <person name="Chen C.W."/>
            <person name="Collins M."/>
            <person name="Cronin A."/>
            <person name="Fraser A."/>
            <person name="Goble A."/>
            <person name="Hidalgo J."/>
            <person name="Hornsby T."/>
            <person name="Howarth S."/>
            <person name="Huang C.-H."/>
            <person name="Kieser T."/>
            <person name="Larke L."/>
            <person name="Murphy L.D."/>
            <person name="Oliver K."/>
            <person name="O'Neil S."/>
            <person name="Rabbinowitsch E."/>
            <person name="Rajandream M.A."/>
            <person name="Rutherford K.M."/>
            <person name="Rutter S."/>
            <person name="Seeger K."/>
            <person name="Saunders D."/>
            <person name="Sharp S."/>
            <person name="Squares R."/>
            <person name="Squares S."/>
            <person name="Taylor K."/>
            <person name="Warren T."/>
            <person name="Wietzorrek A."/>
            <person name="Woodward J.R."/>
            <person name="Barrell B.G."/>
            <person name="Parkhill J."/>
            <person name="Hopwood D.A."/>
        </authorList>
    </citation>
    <scope>NUCLEOTIDE SEQUENCE [LARGE SCALE GENOMIC DNA]</scope>
    <source>
        <strain>ATCC BAA-471 / A3(2) / M145</strain>
    </source>
</reference>
<reference key="2">
    <citation type="submission" date="1998-02" db="EMBL/GenBank/DDBJ databases">
        <authorList>
            <person name="Loriaux A."/>
            <person name="Brans A."/>
            <person name="Dusart J."/>
        </authorList>
    </citation>
    <scope>NUCLEOTIDE SEQUENCE [GENOMIC DNA] OF 1-65</scope>
    <source>
        <strain>A3(2) / NRRL B-16638</strain>
    </source>
</reference>
<feature type="chain" id="PRO_0000095877" description="Translation initiation factor IF-1">
    <location>
        <begin position="1"/>
        <end position="73"/>
    </location>
</feature>
<feature type="domain" description="S1-like" evidence="1">
    <location>
        <begin position="1"/>
        <end position="73"/>
    </location>
</feature>
<keyword id="KW-0963">Cytoplasm</keyword>
<keyword id="KW-0396">Initiation factor</keyword>
<keyword id="KW-0648">Protein biosynthesis</keyword>
<keyword id="KW-1185">Reference proteome</keyword>
<keyword id="KW-0694">RNA-binding</keyword>
<keyword id="KW-0699">rRNA-binding</keyword>
<accession>P60515</accession>
<accession>O54209</accession>
<evidence type="ECO:0000255" key="1">
    <source>
        <dbReference type="HAMAP-Rule" id="MF_00075"/>
    </source>
</evidence>
<protein>
    <recommendedName>
        <fullName evidence="1">Translation initiation factor IF-1</fullName>
    </recommendedName>
</protein>
<name>IF1_STRCO</name>
<comment type="function">
    <text evidence="1">One of the essential components for the initiation of protein synthesis. Stabilizes the binding of IF-2 and IF-3 on the 30S subunit to which N-formylmethionyl-tRNA(fMet) subsequently binds. Helps modulate mRNA selection, yielding the 30S pre-initiation complex (PIC). Upon addition of the 50S ribosomal subunit IF-1, IF-2 and IF-3 are released leaving the mature 70S translation initiation complex.</text>
</comment>
<comment type="subunit">
    <text evidence="1">Component of the 30S ribosomal translation pre-initiation complex which assembles on the 30S ribosome in the order IF-2 and IF-3, IF-1 and N-formylmethionyl-tRNA(fMet); mRNA recruitment can occur at any time during PIC assembly.</text>
</comment>
<comment type="subcellular location">
    <subcellularLocation>
        <location evidence="1">Cytoplasm</location>
    </subcellularLocation>
</comment>
<comment type="similarity">
    <text evidence="1">Belongs to the IF-1 family.</text>
</comment>
<dbReference type="EMBL" id="AL939121">
    <property type="protein sequence ID" value="CAA20381.1"/>
    <property type="molecule type" value="Genomic_DNA"/>
</dbReference>
<dbReference type="EMBL" id="X83011">
    <property type="protein sequence ID" value="CAA58140.1"/>
    <property type="molecule type" value="Genomic_DNA"/>
</dbReference>
<dbReference type="PIR" id="T35554">
    <property type="entry name" value="T35554"/>
</dbReference>
<dbReference type="RefSeq" id="NP_628883.1">
    <property type="nucleotide sequence ID" value="NC_003888.3"/>
</dbReference>
<dbReference type="RefSeq" id="WP_003948620.1">
    <property type="nucleotide sequence ID" value="NZ_VNID01000016.1"/>
</dbReference>
<dbReference type="SMR" id="P60515"/>
<dbReference type="FunCoup" id="P60515">
    <property type="interactions" value="64"/>
</dbReference>
<dbReference type="STRING" id="100226.gene:17762374"/>
<dbReference type="PaxDb" id="100226-SCO4725"/>
<dbReference type="GeneID" id="97403225"/>
<dbReference type="KEGG" id="sco:SCO4725"/>
<dbReference type="PATRIC" id="fig|100226.15.peg.4796"/>
<dbReference type="eggNOG" id="COG0361">
    <property type="taxonomic scope" value="Bacteria"/>
</dbReference>
<dbReference type="HOGENOM" id="CLU_151267_1_0_11"/>
<dbReference type="InParanoid" id="P60515"/>
<dbReference type="OrthoDB" id="9803250at2"/>
<dbReference type="PhylomeDB" id="P60515"/>
<dbReference type="PRO" id="PR:P60515"/>
<dbReference type="Proteomes" id="UP000001973">
    <property type="component" value="Chromosome"/>
</dbReference>
<dbReference type="GO" id="GO:0005829">
    <property type="term" value="C:cytosol"/>
    <property type="evidence" value="ECO:0000318"/>
    <property type="project" value="GO_Central"/>
</dbReference>
<dbReference type="GO" id="GO:0043022">
    <property type="term" value="F:ribosome binding"/>
    <property type="evidence" value="ECO:0000318"/>
    <property type="project" value="GO_Central"/>
</dbReference>
<dbReference type="GO" id="GO:0019843">
    <property type="term" value="F:rRNA binding"/>
    <property type="evidence" value="ECO:0007669"/>
    <property type="project" value="UniProtKB-UniRule"/>
</dbReference>
<dbReference type="GO" id="GO:0003743">
    <property type="term" value="F:translation initiation factor activity"/>
    <property type="evidence" value="ECO:0007669"/>
    <property type="project" value="UniProtKB-UniRule"/>
</dbReference>
<dbReference type="CDD" id="cd04451">
    <property type="entry name" value="S1_IF1"/>
    <property type="match status" value="1"/>
</dbReference>
<dbReference type="FunFam" id="2.40.50.140:FF:000002">
    <property type="entry name" value="Translation initiation factor IF-1"/>
    <property type="match status" value="1"/>
</dbReference>
<dbReference type="Gene3D" id="2.40.50.140">
    <property type="entry name" value="Nucleic acid-binding proteins"/>
    <property type="match status" value="1"/>
</dbReference>
<dbReference type="HAMAP" id="MF_00075">
    <property type="entry name" value="IF_1"/>
    <property type="match status" value="1"/>
</dbReference>
<dbReference type="InterPro" id="IPR012340">
    <property type="entry name" value="NA-bd_OB-fold"/>
</dbReference>
<dbReference type="InterPro" id="IPR006196">
    <property type="entry name" value="RNA-binding_domain_S1_IF1"/>
</dbReference>
<dbReference type="InterPro" id="IPR003029">
    <property type="entry name" value="S1_domain"/>
</dbReference>
<dbReference type="InterPro" id="IPR004368">
    <property type="entry name" value="TIF_IF1"/>
</dbReference>
<dbReference type="NCBIfam" id="TIGR00008">
    <property type="entry name" value="infA"/>
    <property type="match status" value="1"/>
</dbReference>
<dbReference type="PANTHER" id="PTHR33370">
    <property type="entry name" value="TRANSLATION INITIATION FACTOR IF-1, CHLOROPLASTIC"/>
    <property type="match status" value="1"/>
</dbReference>
<dbReference type="PANTHER" id="PTHR33370:SF1">
    <property type="entry name" value="TRANSLATION INITIATION FACTOR IF-1, CHLOROPLASTIC"/>
    <property type="match status" value="1"/>
</dbReference>
<dbReference type="Pfam" id="PF01176">
    <property type="entry name" value="eIF-1a"/>
    <property type="match status" value="1"/>
</dbReference>
<dbReference type="SMART" id="SM00316">
    <property type="entry name" value="S1"/>
    <property type="match status" value="1"/>
</dbReference>
<dbReference type="SUPFAM" id="SSF50249">
    <property type="entry name" value="Nucleic acid-binding proteins"/>
    <property type="match status" value="1"/>
</dbReference>
<dbReference type="PROSITE" id="PS50832">
    <property type="entry name" value="S1_IF1_TYPE"/>
    <property type="match status" value="1"/>
</dbReference>
<sequence>MAKKQGAIEIEGTVVESLPNAMFKVELQNGHQVLAHISGKMRMHYIRILPDDRVVVELSPYDLTRGRIVYRYK</sequence>
<proteinExistence type="inferred from homology"/>
<gene>
    <name evidence="1" type="primary">infA</name>
    <name type="ordered locus">SCO4725</name>
    <name type="ORF">SC6G4.03</name>
</gene>